<sequence length="358" mass="38650">MPSVSPAGPSAGAVPNATAVTTVRTNASGLEVPLFHLFARLDEELHGTFPGLWLALMAVHGAIFLAGLVLNGLALYVFCCRTRAKTPSVIYTINLVVTDLLVGLSLPTRFAVYYGARGCLRCAFPHVLGYFLNMHCSILFLTCICVDRYLAIVRPEGSRRCRQPACARAVCAFVWLAAGAVTLSVLGVTGSRPCCRVFALTVLEFLLPLLVISVFTGRIMCALSRPGLLHQGRQRRVRAMQLLLTVLIIFLVCFTPFHARQVAVALWPDMPHHTSLVVYHVAVTLSSLNSCMDPIVYCFVTSGFQATVRGLFGQHGEREPSSGDVVSMHRSSKGSGRHHILSAGPHALTQALANGPEA</sequence>
<feature type="chain" id="PRO_0000069541" description="G-protein coupled receptor 20">
    <location>
        <begin position="1"/>
        <end position="358"/>
    </location>
</feature>
<feature type="topological domain" description="Extracellular" evidence="1">
    <location>
        <begin position="1"/>
        <end position="48"/>
    </location>
</feature>
<feature type="transmembrane region" description="Helical; Name=1" evidence="1">
    <location>
        <begin position="49"/>
        <end position="69"/>
    </location>
</feature>
<feature type="topological domain" description="Cytoplasmic" evidence="1">
    <location>
        <begin position="70"/>
        <end position="86"/>
    </location>
</feature>
<feature type="transmembrane region" description="Helical; Name=2" evidence="1">
    <location>
        <begin position="87"/>
        <end position="107"/>
    </location>
</feature>
<feature type="topological domain" description="Extracellular" evidence="1">
    <location>
        <begin position="108"/>
        <end position="125"/>
    </location>
</feature>
<feature type="transmembrane region" description="Helical; Name=3" evidence="1">
    <location>
        <begin position="126"/>
        <end position="146"/>
    </location>
</feature>
<feature type="topological domain" description="Cytoplasmic" evidence="1">
    <location>
        <begin position="147"/>
        <end position="168"/>
    </location>
</feature>
<feature type="transmembrane region" description="Helical; Name=4" evidence="1">
    <location>
        <begin position="169"/>
        <end position="189"/>
    </location>
</feature>
<feature type="topological domain" description="Extracellular" evidence="1">
    <location>
        <begin position="190"/>
        <end position="196"/>
    </location>
</feature>
<feature type="transmembrane region" description="Helical; Name=5" evidence="1">
    <location>
        <begin position="197"/>
        <end position="217"/>
    </location>
</feature>
<feature type="topological domain" description="Cytoplasmic" evidence="1">
    <location>
        <begin position="218"/>
        <end position="238"/>
    </location>
</feature>
<feature type="transmembrane region" description="Helical; Name=6" evidence="1">
    <location>
        <begin position="239"/>
        <end position="259"/>
    </location>
</feature>
<feature type="topological domain" description="Extracellular" evidence="1">
    <location>
        <begin position="260"/>
        <end position="275"/>
    </location>
</feature>
<feature type="transmembrane region" description="Helical; Name=7" evidence="1">
    <location>
        <begin position="276"/>
        <end position="296"/>
    </location>
</feature>
<feature type="topological domain" description="Cytoplasmic" evidence="1">
    <location>
        <begin position="297"/>
        <end position="358"/>
    </location>
</feature>
<feature type="region of interest" description="Disordered" evidence="3">
    <location>
        <begin position="315"/>
        <end position="339"/>
    </location>
</feature>
<feature type="compositionally biased region" description="Basic residues" evidence="3">
    <location>
        <begin position="330"/>
        <end position="339"/>
    </location>
</feature>
<feature type="glycosylation site" description="N-linked (GlcNAc...) asparagine" evidence="1">
    <location>
        <position position="16"/>
    </location>
</feature>
<feature type="glycosylation site" description="N-linked (GlcNAc...) asparagine" evidence="1">
    <location>
        <position position="26"/>
    </location>
</feature>
<feature type="sequence variant" id="VAR_055917" description="In dbSNP:rs10875472." evidence="4 6">
    <original>H</original>
    <variation>R</variation>
    <location>
        <position position="230"/>
    </location>
</feature>
<feature type="sequence variant" id="VAR_055918" description="In dbSNP:rs36092215.">
    <original>R</original>
    <variation>C</variation>
    <location>
        <position position="260"/>
    </location>
</feature>
<feature type="sequence variant" id="VAR_055919" description="In dbSNP:rs34591516.">
    <original>G</original>
    <variation>S</variation>
    <location>
        <position position="313"/>
    </location>
</feature>
<feature type="mutagenesis site" description="Abolishes G(i) activation." evidence="5">
    <original>R</original>
    <variation>A</variation>
    <location>
        <position position="148"/>
    </location>
</feature>
<feature type="sequence conflict" description="In Ref. 1; AAC51302." evidence="7" ref="1">
    <original>WL</original>
    <variation>CV</variation>
    <location>
        <begin position="53"/>
        <end position="54"/>
    </location>
</feature>
<feature type="sequence conflict" description="In Ref. 1; AAC51302." evidence="7" ref="1">
    <original>GSRR</original>
    <variation>APAA</variation>
    <location>
        <begin position="157"/>
        <end position="160"/>
    </location>
</feature>
<feature type="helix" evidence="8">
    <location>
        <begin position="34"/>
        <end position="48"/>
    </location>
</feature>
<feature type="helix" evidence="8">
    <location>
        <begin position="50"/>
        <end position="80"/>
    </location>
</feature>
<feature type="helix" evidence="8">
    <location>
        <begin position="87"/>
        <end position="115"/>
    </location>
</feature>
<feature type="turn" evidence="8">
    <location>
        <begin position="116"/>
        <end position="118"/>
    </location>
</feature>
<feature type="helix" evidence="8">
    <location>
        <begin position="121"/>
        <end position="123"/>
    </location>
</feature>
<feature type="helix" evidence="8">
    <location>
        <begin position="124"/>
        <end position="150"/>
    </location>
</feature>
<feature type="strand" evidence="8">
    <location>
        <begin position="158"/>
        <end position="161"/>
    </location>
</feature>
<feature type="helix" evidence="8">
    <location>
        <begin position="164"/>
        <end position="186"/>
    </location>
</feature>
<feature type="strand" evidence="8">
    <location>
        <begin position="188"/>
        <end position="190"/>
    </location>
</feature>
<feature type="helix" evidence="8">
    <location>
        <begin position="198"/>
        <end position="204"/>
    </location>
</feature>
<feature type="helix" evidence="8">
    <location>
        <begin position="206"/>
        <end position="224"/>
    </location>
</feature>
<feature type="helix" evidence="8">
    <location>
        <begin position="230"/>
        <end position="253"/>
    </location>
</feature>
<feature type="helix" evidence="8">
    <location>
        <begin position="255"/>
        <end position="266"/>
    </location>
</feature>
<feature type="helix" evidence="8">
    <location>
        <begin position="272"/>
        <end position="292"/>
    </location>
</feature>
<feature type="helix" evidence="8">
    <location>
        <begin position="293"/>
        <end position="295"/>
    </location>
</feature>
<feature type="helix" evidence="8">
    <location>
        <begin position="296"/>
        <end position="300"/>
    </location>
</feature>
<feature type="helix" evidence="8">
    <location>
        <begin position="303"/>
        <end position="316"/>
    </location>
</feature>
<keyword id="KW-0002">3D-structure</keyword>
<keyword id="KW-1003">Cell membrane</keyword>
<keyword id="KW-0297">G-protein coupled receptor</keyword>
<keyword id="KW-0325">Glycoprotein</keyword>
<keyword id="KW-0472">Membrane</keyword>
<keyword id="KW-0675">Receptor</keyword>
<keyword id="KW-1185">Reference proteome</keyword>
<keyword id="KW-0807">Transducer</keyword>
<keyword id="KW-0812">Transmembrane</keyword>
<keyword id="KW-1133">Transmembrane helix</keyword>
<accession>Q99678</accession>
<accession>Q17R96</accession>
<reference key="1">
    <citation type="journal article" date="1997" name="Gene">
        <title>Cloning and chromosomal mapping of four putative novel human G-protein-coupled receptor genes.</title>
        <authorList>
            <person name="O'Dowd B.F."/>
            <person name="Nguyen T."/>
            <person name="Jung B.P."/>
            <person name="Marchese A."/>
            <person name="Cheng R."/>
            <person name="Heng H.H.Q."/>
            <person name="Kolakowski L.F. Jr."/>
            <person name="Lynch K.R."/>
            <person name="George S.R."/>
        </authorList>
    </citation>
    <scope>NUCLEOTIDE SEQUENCE [GENOMIC DNA]</scope>
</reference>
<reference key="2">
    <citation type="submission" date="2005-07" db="EMBL/GenBank/DDBJ databases">
        <authorList>
            <person name="Mural R.J."/>
            <person name="Istrail S."/>
            <person name="Sutton G.G."/>
            <person name="Florea L."/>
            <person name="Halpern A.L."/>
            <person name="Mobarry C.M."/>
            <person name="Lippert R."/>
            <person name="Walenz B."/>
            <person name="Shatkay H."/>
            <person name="Dew I."/>
            <person name="Miller J.R."/>
            <person name="Flanigan M.J."/>
            <person name="Edwards N.J."/>
            <person name="Bolanos R."/>
            <person name="Fasulo D."/>
            <person name="Halldorsson B.V."/>
            <person name="Hannenhalli S."/>
            <person name="Turner R."/>
            <person name="Yooseph S."/>
            <person name="Lu F."/>
            <person name="Nusskern D.R."/>
            <person name="Shue B.C."/>
            <person name="Zheng X.H."/>
            <person name="Zhong F."/>
            <person name="Delcher A.L."/>
            <person name="Huson D.H."/>
            <person name="Kravitz S.A."/>
            <person name="Mouchard L."/>
            <person name="Reinert K."/>
            <person name="Remington K.A."/>
            <person name="Clark A.G."/>
            <person name="Waterman M.S."/>
            <person name="Eichler E.E."/>
            <person name="Adams M.D."/>
            <person name="Hunkapiller M.W."/>
            <person name="Myers E.W."/>
            <person name="Venter J.C."/>
        </authorList>
    </citation>
    <scope>NUCLEOTIDE SEQUENCE [LARGE SCALE GENOMIC DNA]</scope>
    <scope>VARIANT ARG-230</scope>
</reference>
<reference key="3">
    <citation type="journal article" date="2004" name="Genome Res.">
        <title>The status, quality, and expansion of the NIH full-length cDNA project: the Mammalian Gene Collection (MGC).</title>
        <authorList>
            <consortium name="The MGC Project Team"/>
        </authorList>
    </citation>
    <scope>NUCLEOTIDE SEQUENCE [LARGE SCALE MRNA]</scope>
    <scope>VARIANT ARG-230</scope>
    <source>
        <tissue>Lung</tissue>
        <tissue>Placenta</tissue>
    </source>
</reference>
<reference key="4">
    <citation type="journal article" date="2008" name="J. Biol. Chem.">
        <title>Characterization of an orphan G protein-coupled receptor, GPR20, that constitutively activates Gi proteins.</title>
        <authorList>
            <person name="Hase M."/>
            <person name="Yokomizo T."/>
            <person name="Shimizu T."/>
            <person name="Nakamura M."/>
        </authorList>
    </citation>
    <scope>FUNCTION</scope>
    <scope>TISSUE SPECIFICITY</scope>
    <scope>SUBCELLULAR LOCATION</scope>
    <scope>MUTAGENESIS OF ARG-148</scope>
</reference>
<organism>
    <name type="scientific">Homo sapiens</name>
    <name type="common">Human</name>
    <dbReference type="NCBI Taxonomy" id="9606"/>
    <lineage>
        <taxon>Eukaryota</taxon>
        <taxon>Metazoa</taxon>
        <taxon>Chordata</taxon>
        <taxon>Craniata</taxon>
        <taxon>Vertebrata</taxon>
        <taxon>Euteleostomi</taxon>
        <taxon>Mammalia</taxon>
        <taxon>Eutheria</taxon>
        <taxon>Euarchontoglires</taxon>
        <taxon>Primates</taxon>
        <taxon>Haplorrhini</taxon>
        <taxon>Catarrhini</taxon>
        <taxon>Hominidae</taxon>
        <taxon>Homo</taxon>
    </lineage>
</organism>
<dbReference type="EMBL" id="U66579">
    <property type="protein sequence ID" value="AAC51302.1"/>
    <property type="molecule type" value="Genomic_DNA"/>
</dbReference>
<dbReference type="EMBL" id="CH471060">
    <property type="protein sequence ID" value="EAW92227.1"/>
    <property type="molecule type" value="Genomic_DNA"/>
</dbReference>
<dbReference type="EMBL" id="BC117409">
    <property type="protein sequence ID" value="AAI17410.1"/>
    <property type="molecule type" value="mRNA"/>
</dbReference>
<dbReference type="CCDS" id="CCDS34949.1"/>
<dbReference type="RefSeq" id="NP_005284.2">
    <property type="nucleotide sequence ID" value="NM_005293.3"/>
</dbReference>
<dbReference type="PDB" id="8HS2">
    <property type="method" value="EM"/>
    <property type="resolution" value="3.08 A"/>
    <property type="chains" value="R=1-316"/>
</dbReference>
<dbReference type="PDB" id="8HS3">
    <property type="method" value="EM"/>
    <property type="resolution" value="3.14 A"/>
    <property type="chains" value="R=1-358"/>
</dbReference>
<dbReference type="PDB" id="8HSC">
    <property type="method" value="EM"/>
    <property type="resolution" value="3.22 A"/>
    <property type="chains" value="R=1-358"/>
</dbReference>
<dbReference type="PDBsum" id="8HS2"/>
<dbReference type="PDBsum" id="8HS3"/>
<dbReference type="PDBsum" id="8HSC"/>
<dbReference type="EMDB" id="EMD-34983"/>
<dbReference type="EMDB" id="EMD-34984"/>
<dbReference type="EMDB" id="EMD-34993"/>
<dbReference type="SMR" id="Q99678"/>
<dbReference type="BioGRID" id="109102">
    <property type="interactions" value="3"/>
</dbReference>
<dbReference type="FunCoup" id="Q99678">
    <property type="interactions" value="348"/>
</dbReference>
<dbReference type="IntAct" id="Q99678">
    <property type="interactions" value="3"/>
</dbReference>
<dbReference type="STRING" id="9606.ENSP00000366970"/>
<dbReference type="ChEMBL" id="CHEMBL4523912"/>
<dbReference type="TCDB" id="9.A.14.13.42">
    <property type="family name" value="the g-protein-coupled receptor (gpcr) family"/>
</dbReference>
<dbReference type="GlyCosmos" id="Q99678">
    <property type="glycosylation" value="2 sites, No reported glycans"/>
</dbReference>
<dbReference type="GlyGen" id="Q99678">
    <property type="glycosylation" value="2 sites"/>
</dbReference>
<dbReference type="iPTMnet" id="Q99678"/>
<dbReference type="PhosphoSitePlus" id="Q99678"/>
<dbReference type="BioMuta" id="GPR20"/>
<dbReference type="DMDM" id="281185467"/>
<dbReference type="CPTAC" id="CPTAC-1184"/>
<dbReference type="jPOST" id="Q99678"/>
<dbReference type="PaxDb" id="9606-ENSP00000366970"/>
<dbReference type="PeptideAtlas" id="Q99678"/>
<dbReference type="Antibodypedia" id="14510">
    <property type="antibodies" value="248 antibodies from 30 providers"/>
</dbReference>
<dbReference type="DNASU" id="2843"/>
<dbReference type="Ensembl" id="ENST00000377741.4">
    <property type="protein sequence ID" value="ENSP00000366970.3"/>
    <property type="gene ID" value="ENSG00000204882.4"/>
</dbReference>
<dbReference type="Ensembl" id="ENST00000613887.2">
    <property type="protein sequence ID" value="ENSP00000479665.1"/>
    <property type="gene ID" value="ENSG00000275181.2"/>
</dbReference>
<dbReference type="Ensembl" id="ENST00000707609.1">
    <property type="protein sequence ID" value="ENSP00000516924.1"/>
    <property type="gene ID" value="ENSG00000291465.1"/>
</dbReference>
<dbReference type="GeneID" id="2843"/>
<dbReference type="KEGG" id="hsa:2843"/>
<dbReference type="MANE-Select" id="ENST00000377741.4">
    <property type="protein sequence ID" value="ENSP00000366970.3"/>
    <property type="RefSeq nucleotide sequence ID" value="NM_005293.3"/>
    <property type="RefSeq protein sequence ID" value="NP_005284.2"/>
</dbReference>
<dbReference type="UCSC" id="uc003ywf.5">
    <property type="organism name" value="human"/>
</dbReference>
<dbReference type="AGR" id="HGNC:4475"/>
<dbReference type="CTD" id="2843"/>
<dbReference type="DisGeNET" id="2843"/>
<dbReference type="GeneCards" id="GPR20"/>
<dbReference type="HGNC" id="HGNC:4475">
    <property type="gene designation" value="GPR20"/>
</dbReference>
<dbReference type="HPA" id="ENSG00000204882">
    <property type="expression patterns" value="Low tissue specificity"/>
</dbReference>
<dbReference type="MIM" id="601908">
    <property type="type" value="gene"/>
</dbReference>
<dbReference type="neXtProt" id="NX_Q99678"/>
<dbReference type="OpenTargets" id="ENSG00000204882"/>
<dbReference type="PharmGKB" id="PA28863"/>
<dbReference type="VEuPathDB" id="HostDB:ENSG00000204882"/>
<dbReference type="eggNOG" id="ENOG502QQUE">
    <property type="taxonomic scope" value="Eukaryota"/>
</dbReference>
<dbReference type="GeneTree" id="ENSGT01040000240444"/>
<dbReference type="HOGENOM" id="CLU_009579_8_2_1"/>
<dbReference type="InParanoid" id="Q99678"/>
<dbReference type="OMA" id="WRQPACA"/>
<dbReference type="OrthoDB" id="6069656at2759"/>
<dbReference type="PAN-GO" id="Q99678">
    <property type="GO annotations" value="4 GO annotations based on evolutionary models"/>
</dbReference>
<dbReference type="PhylomeDB" id="Q99678"/>
<dbReference type="TreeFam" id="TF330828"/>
<dbReference type="PathwayCommons" id="Q99678"/>
<dbReference type="Reactome" id="R-HSA-418555">
    <property type="pathway name" value="G alpha (s) signalling events"/>
</dbReference>
<dbReference type="SignaLink" id="Q99678"/>
<dbReference type="BioGRID-ORCS" id="2843">
    <property type="hits" value="24 hits in 1139 CRISPR screens"/>
</dbReference>
<dbReference type="GeneWiki" id="GPR20"/>
<dbReference type="GenomeRNAi" id="2843"/>
<dbReference type="Pharos" id="Q99678">
    <property type="development level" value="Tdark"/>
</dbReference>
<dbReference type="PRO" id="PR:Q99678"/>
<dbReference type="Proteomes" id="UP000005640">
    <property type="component" value="Chromosome 8"/>
</dbReference>
<dbReference type="RNAct" id="Q99678">
    <property type="molecule type" value="protein"/>
</dbReference>
<dbReference type="Bgee" id="ENSG00000204882">
    <property type="expression patterns" value="Expressed in primordial germ cell in gonad and 85 other cell types or tissues"/>
</dbReference>
<dbReference type="GO" id="GO:0005886">
    <property type="term" value="C:plasma membrane"/>
    <property type="evidence" value="ECO:0000314"/>
    <property type="project" value="UniProtKB"/>
</dbReference>
<dbReference type="GO" id="GO:0043235">
    <property type="term" value="C:receptor complex"/>
    <property type="evidence" value="ECO:0000314"/>
    <property type="project" value="MGI"/>
</dbReference>
<dbReference type="GO" id="GO:0004930">
    <property type="term" value="F:G protein-coupled receptor activity"/>
    <property type="evidence" value="ECO:0000314"/>
    <property type="project" value="UniProtKB"/>
</dbReference>
<dbReference type="GO" id="GO:0007186">
    <property type="term" value="P:G protein-coupled receptor signaling pathway"/>
    <property type="evidence" value="ECO:0000318"/>
    <property type="project" value="GO_Central"/>
</dbReference>
<dbReference type="CDD" id="cd15163">
    <property type="entry name" value="7tmA_GPR20"/>
    <property type="match status" value="1"/>
</dbReference>
<dbReference type="FunFam" id="1.20.1070.10:FF:000243">
    <property type="entry name" value="G protein-coupled receptor 20"/>
    <property type="match status" value="1"/>
</dbReference>
<dbReference type="Gene3D" id="1.20.1070.10">
    <property type="entry name" value="Rhodopsin 7-helix transmembrane proteins"/>
    <property type="match status" value="1"/>
</dbReference>
<dbReference type="InterPro" id="IPR000276">
    <property type="entry name" value="GPCR_Rhodpsn"/>
</dbReference>
<dbReference type="InterPro" id="IPR017452">
    <property type="entry name" value="GPCR_Rhodpsn_7TM"/>
</dbReference>
<dbReference type="PANTHER" id="PTHR24232">
    <property type="entry name" value="G-PROTEIN COUPLED RECEPTOR"/>
    <property type="match status" value="1"/>
</dbReference>
<dbReference type="PANTHER" id="PTHR24232:SF7">
    <property type="entry name" value="G-PROTEIN COUPLED RECEPTOR 20"/>
    <property type="match status" value="1"/>
</dbReference>
<dbReference type="Pfam" id="PF00001">
    <property type="entry name" value="7tm_1"/>
    <property type="match status" value="1"/>
</dbReference>
<dbReference type="PRINTS" id="PR00237">
    <property type="entry name" value="GPCRRHODOPSN"/>
</dbReference>
<dbReference type="SUPFAM" id="SSF81321">
    <property type="entry name" value="Family A G protein-coupled receptor-like"/>
    <property type="match status" value="1"/>
</dbReference>
<dbReference type="PROSITE" id="PS00237">
    <property type="entry name" value="G_PROTEIN_RECEP_F1_1"/>
    <property type="match status" value="1"/>
</dbReference>
<dbReference type="PROSITE" id="PS50262">
    <property type="entry name" value="G_PROTEIN_RECEP_F1_2"/>
    <property type="match status" value="1"/>
</dbReference>
<gene>
    <name type="primary">GPR20</name>
</gene>
<proteinExistence type="evidence at protein level"/>
<protein>
    <recommendedName>
        <fullName>G-protein coupled receptor 20</fullName>
    </recommendedName>
</protein>
<evidence type="ECO:0000255" key="1"/>
<evidence type="ECO:0000255" key="2">
    <source>
        <dbReference type="PROSITE-ProRule" id="PRU00521"/>
    </source>
</evidence>
<evidence type="ECO:0000256" key="3">
    <source>
        <dbReference type="SAM" id="MobiDB-lite"/>
    </source>
</evidence>
<evidence type="ECO:0000269" key="4">
    <source>
    </source>
</evidence>
<evidence type="ECO:0000269" key="5">
    <source>
    </source>
</evidence>
<evidence type="ECO:0000269" key="6">
    <source ref="2"/>
</evidence>
<evidence type="ECO:0000305" key="7"/>
<evidence type="ECO:0007829" key="8">
    <source>
        <dbReference type="PDB" id="8HS2"/>
    </source>
</evidence>
<comment type="function">
    <text evidence="5">Orphan receptor with constitutive G(i) signaling activity that activate cyclic AMP.</text>
</comment>
<comment type="subcellular location">
    <subcellularLocation>
        <location evidence="5">Cell membrane</location>
        <topology evidence="5">Multi-pass membrane protein</topology>
    </subcellularLocation>
</comment>
<comment type="tissue specificity">
    <text evidence="5">Ubiquitous with highest levels in intestinal tissues. In the brain detected in thalamus, putamen, and caudate, but not in frontal cortex, pons and hypothalamus.</text>
</comment>
<comment type="similarity">
    <text evidence="2">Belongs to the G-protein coupled receptor 1 family.</text>
</comment>
<name>GPR20_HUMAN</name>